<name>CH601_PAEAT</name>
<evidence type="ECO:0000255" key="1">
    <source>
        <dbReference type="HAMAP-Rule" id="MF_00600"/>
    </source>
</evidence>
<dbReference type="EC" id="5.6.1.7" evidence="1"/>
<dbReference type="EMBL" id="CP000474">
    <property type="protein sequence ID" value="ABM06646.1"/>
    <property type="molecule type" value="Genomic_DNA"/>
</dbReference>
<dbReference type="SMR" id="A1R3H9"/>
<dbReference type="STRING" id="290340.AAur_1001"/>
<dbReference type="KEGG" id="aau:AAur_1001"/>
<dbReference type="eggNOG" id="COG0459">
    <property type="taxonomic scope" value="Bacteria"/>
</dbReference>
<dbReference type="HOGENOM" id="CLU_016503_3_0_11"/>
<dbReference type="OrthoDB" id="9766614at2"/>
<dbReference type="Proteomes" id="UP000000637">
    <property type="component" value="Chromosome"/>
</dbReference>
<dbReference type="GO" id="GO:0005737">
    <property type="term" value="C:cytoplasm"/>
    <property type="evidence" value="ECO:0007669"/>
    <property type="project" value="UniProtKB-SubCell"/>
</dbReference>
<dbReference type="GO" id="GO:0005524">
    <property type="term" value="F:ATP binding"/>
    <property type="evidence" value="ECO:0007669"/>
    <property type="project" value="UniProtKB-UniRule"/>
</dbReference>
<dbReference type="GO" id="GO:0140662">
    <property type="term" value="F:ATP-dependent protein folding chaperone"/>
    <property type="evidence" value="ECO:0007669"/>
    <property type="project" value="InterPro"/>
</dbReference>
<dbReference type="GO" id="GO:0016853">
    <property type="term" value="F:isomerase activity"/>
    <property type="evidence" value="ECO:0007669"/>
    <property type="project" value="UniProtKB-KW"/>
</dbReference>
<dbReference type="GO" id="GO:0051082">
    <property type="term" value="F:unfolded protein binding"/>
    <property type="evidence" value="ECO:0007669"/>
    <property type="project" value="UniProtKB-UniRule"/>
</dbReference>
<dbReference type="GO" id="GO:0042026">
    <property type="term" value="P:protein refolding"/>
    <property type="evidence" value="ECO:0007669"/>
    <property type="project" value="UniProtKB-UniRule"/>
</dbReference>
<dbReference type="CDD" id="cd03344">
    <property type="entry name" value="GroEL"/>
    <property type="match status" value="1"/>
</dbReference>
<dbReference type="FunFam" id="3.50.7.10:FF:000001">
    <property type="entry name" value="60 kDa chaperonin"/>
    <property type="match status" value="1"/>
</dbReference>
<dbReference type="Gene3D" id="3.50.7.10">
    <property type="entry name" value="GroEL"/>
    <property type="match status" value="1"/>
</dbReference>
<dbReference type="Gene3D" id="1.10.560.10">
    <property type="entry name" value="GroEL-like equatorial domain"/>
    <property type="match status" value="1"/>
</dbReference>
<dbReference type="Gene3D" id="3.30.260.10">
    <property type="entry name" value="TCP-1-like chaperonin intermediate domain"/>
    <property type="match status" value="1"/>
</dbReference>
<dbReference type="HAMAP" id="MF_00600">
    <property type="entry name" value="CH60"/>
    <property type="match status" value="1"/>
</dbReference>
<dbReference type="InterPro" id="IPR018370">
    <property type="entry name" value="Chaperonin_Cpn60_CS"/>
</dbReference>
<dbReference type="InterPro" id="IPR001844">
    <property type="entry name" value="Cpn60/GroEL"/>
</dbReference>
<dbReference type="InterPro" id="IPR002423">
    <property type="entry name" value="Cpn60/GroEL/TCP-1"/>
</dbReference>
<dbReference type="InterPro" id="IPR027409">
    <property type="entry name" value="GroEL-like_apical_dom_sf"/>
</dbReference>
<dbReference type="InterPro" id="IPR027413">
    <property type="entry name" value="GROEL-like_equatorial_sf"/>
</dbReference>
<dbReference type="InterPro" id="IPR027410">
    <property type="entry name" value="TCP-1-like_intermed_sf"/>
</dbReference>
<dbReference type="NCBIfam" id="TIGR02348">
    <property type="entry name" value="GroEL"/>
    <property type="match status" value="1"/>
</dbReference>
<dbReference type="NCBIfam" id="NF000592">
    <property type="entry name" value="PRK00013.1"/>
    <property type="match status" value="1"/>
</dbReference>
<dbReference type="NCBIfam" id="NF009487">
    <property type="entry name" value="PRK12849.1"/>
    <property type="match status" value="1"/>
</dbReference>
<dbReference type="NCBIfam" id="NF009488">
    <property type="entry name" value="PRK12850.1"/>
    <property type="match status" value="1"/>
</dbReference>
<dbReference type="NCBIfam" id="NF009489">
    <property type="entry name" value="PRK12851.1"/>
    <property type="match status" value="1"/>
</dbReference>
<dbReference type="PANTHER" id="PTHR45633">
    <property type="entry name" value="60 KDA HEAT SHOCK PROTEIN, MITOCHONDRIAL"/>
    <property type="match status" value="1"/>
</dbReference>
<dbReference type="Pfam" id="PF00118">
    <property type="entry name" value="Cpn60_TCP1"/>
    <property type="match status" value="1"/>
</dbReference>
<dbReference type="PRINTS" id="PR00298">
    <property type="entry name" value="CHAPERONIN60"/>
</dbReference>
<dbReference type="SUPFAM" id="SSF52029">
    <property type="entry name" value="GroEL apical domain-like"/>
    <property type="match status" value="1"/>
</dbReference>
<dbReference type="SUPFAM" id="SSF48592">
    <property type="entry name" value="GroEL equatorial domain-like"/>
    <property type="match status" value="1"/>
</dbReference>
<dbReference type="SUPFAM" id="SSF54849">
    <property type="entry name" value="GroEL-intermediate domain like"/>
    <property type="match status" value="1"/>
</dbReference>
<dbReference type="PROSITE" id="PS00296">
    <property type="entry name" value="CHAPERONINS_CPN60"/>
    <property type="match status" value="1"/>
</dbReference>
<gene>
    <name evidence="1" type="primary">groEL1</name>
    <name evidence="1" type="synonym">groL1</name>
    <name type="ordered locus">AAur_1001</name>
</gene>
<comment type="function">
    <text evidence="1">Together with its co-chaperonin GroES, plays an essential role in assisting protein folding. The GroEL-GroES system forms a nano-cage that allows encapsulation of the non-native substrate proteins and provides a physical environment optimized to promote and accelerate protein folding.</text>
</comment>
<comment type="catalytic activity">
    <reaction evidence="1">
        <text>ATP + H2O + a folded polypeptide = ADP + phosphate + an unfolded polypeptide.</text>
        <dbReference type="EC" id="5.6.1.7"/>
    </reaction>
</comment>
<comment type="subunit">
    <text evidence="1">Forms a cylinder of 14 subunits composed of two heptameric rings stacked back-to-back. Interacts with the co-chaperonin GroES.</text>
</comment>
<comment type="subcellular location">
    <subcellularLocation>
        <location evidence="1">Cytoplasm</location>
    </subcellularLocation>
</comment>
<comment type="similarity">
    <text evidence="1">Belongs to the chaperonin (HSP60) family.</text>
</comment>
<feature type="chain" id="PRO_0000331966" description="Chaperonin GroEL 1">
    <location>
        <begin position="1"/>
        <end position="541"/>
    </location>
</feature>
<feature type="binding site" evidence="1">
    <location>
        <begin position="29"/>
        <end position="32"/>
    </location>
    <ligand>
        <name>ATP</name>
        <dbReference type="ChEBI" id="CHEBI:30616"/>
    </ligand>
</feature>
<feature type="binding site" evidence="1">
    <location>
        <begin position="86"/>
        <end position="90"/>
    </location>
    <ligand>
        <name>ATP</name>
        <dbReference type="ChEBI" id="CHEBI:30616"/>
    </ligand>
</feature>
<feature type="binding site" evidence="1">
    <location>
        <position position="413"/>
    </location>
    <ligand>
        <name>ATP</name>
        <dbReference type="ChEBI" id="CHEBI:30616"/>
    </ligand>
</feature>
<feature type="binding site" evidence="1">
    <location>
        <begin position="477"/>
        <end position="479"/>
    </location>
    <ligand>
        <name>ATP</name>
        <dbReference type="ChEBI" id="CHEBI:30616"/>
    </ligand>
</feature>
<feature type="binding site" evidence="1">
    <location>
        <position position="493"/>
    </location>
    <ligand>
        <name>ATP</name>
        <dbReference type="ChEBI" id="CHEBI:30616"/>
    </ligand>
</feature>
<proteinExistence type="inferred from homology"/>
<protein>
    <recommendedName>
        <fullName evidence="1">Chaperonin GroEL 1</fullName>
        <ecNumber evidence="1">5.6.1.7</ecNumber>
    </recommendedName>
    <alternativeName>
        <fullName evidence="1">60 kDa chaperonin 1</fullName>
    </alternativeName>
    <alternativeName>
        <fullName evidence="1">Chaperonin-60 1</fullName>
        <shortName evidence="1">Cpn60 1</shortName>
    </alternativeName>
</protein>
<accession>A1R3H9</accession>
<keyword id="KW-0067">ATP-binding</keyword>
<keyword id="KW-0143">Chaperone</keyword>
<keyword id="KW-0963">Cytoplasm</keyword>
<keyword id="KW-0413">Isomerase</keyword>
<keyword id="KW-0547">Nucleotide-binding</keyword>
<organism>
    <name type="scientific">Paenarthrobacter aurescens (strain TC1)</name>
    <dbReference type="NCBI Taxonomy" id="290340"/>
    <lineage>
        <taxon>Bacteria</taxon>
        <taxon>Bacillati</taxon>
        <taxon>Actinomycetota</taxon>
        <taxon>Actinomycetes</taxon>
        <taxon>Micrococcales</taxon>
        <taxon>Micrococcaceae</taxon>
        <taxon>Paenarthrobacter</taxon>
    </lineage>
</organism>
<sequence length="541" mass="56633">MAKIIAFDEEARRGLERGLNILADAVKVTLGPRGRNVVLEKKWGAPTITNDGVSIAKEIELDDPYEKIGAELVKEVAKKTDDVAGDGTTTATVLAQALVKEGLRNVAAGADPLSLKRGIEKAVEAVISELLASAKEIETKEEIAATASISAGDPEIGSLIAEALDKVGKEGVITVEESNTFGLELELTEGMRFDKGYISAYFVTDAERQETVLEDPYILIVNSKISNVKELVTVLEKVMQSNKPLLIIAEDIEGEALATLIVNKIRGTFKSVAVKAPGFGDRRKAQLADIAILTGGQVISEEVGLKLENAGLELLGTARKVVVTKDETTIVEGAGDAEQIAGRVAQIRAEIENSDSDYDREKLQERLAKLAGGVAVIKAGAATEVELKERKHRIEDAVRNAKAAVEEGIVAGGGVALIQAGAKAFANLTLQGDEATGANIVKVAIDAPLKQIAFNAGLEPGVVVDKVRGLPSGHGLNAATGVYEDLLAAGVNDPVKVTRSALQNAASIAGLFLTTEAVVADKPEKNAPAPGGDDMGGMGGF</sequence>
<reference key="1">
    <citation type="journal article" date="2006" name="PLoS Genet.">
        <title>Secrets of soil survival revealed by the genome sequence of Arthrobacter aurescens TC1.</title>
        <authorList>
            <person name="Mongodin E.F."/>
            <person name="Shapir N."/>
            <person name="Daugherty S.C."/>
            <person name="DeBoy R.T."/>
            <person name="Emerson J.B."/>
            <person name="Shvartzbeyn A."/>
            <person name="Radune D."/>
            <person name="Vamathevan J."/>
            <person name="Riggs F."/>
            <person name="Grinberg V."/>
            <person name="Khouri H.M."/>
            <person name="Wackett L.P."/>
            <person name="Nelson K.E."/>
            <person name="Sadowsky M.J."/>
        </authorList>
    </citation>
    <scope>NUCLEOTIDE SEQUENCE [LARGE SCALE GENOMIC DNA]</scope>
    <source>
        <strain>TC1</strain>
    </source>
</reference>